<comment type="function">
    <text evidence="1">This b-type cytochrome is tightly associated with the reaction center of photosystem II (PSII). PSII is a light-driven water:plastoquinone oxidoreductase that uses light energy to abstract electrons from H(2)O, generating O(2) and a proton gradient subsequently used for ATP formation. It consists of a core antenna complex that captures photons, and an electron transfer chain that converts photonic excitation into a charge separation.</text>
</comment>
<comment type="cofactor">
    <cofactor evidence="1">
        <name>heme b</name>
        <dbReference type="ChEBI" id="CHEBI:60344"/>
    </cofactor>
    <text evidence="1">With its partner (PsbF) binds heme. PSII binds additional chlorophylls, carotenoids and specific lipids.</text>
</comment>
<comment type="subunit">
    <text evidence="1">Heterodimer of an alpha subunit and a beta subunit. PSII is composed of 1 copy each of membrane proteins PsbA, PsbB, PsbC, PsbD, PsbE, PsbF, PsbH, PsbI, PsbJ, PsbK, PsbL, PsbM, PsbT, PsbX, PsbY, PsbZ, Psb30/Ycf12, at least 3 peripheral proteins of the oxygen-evolving complex and a large number of cofactors. It forms dimeric complexes.</text>
</comment>
<comment type="subcellular location">
    <subcellularLocation>
        <location evidence="1">Plastid</location>
        <location evidence="1">Chloroplast thylakoid membrane</location>
        <topology evidence="1">Single-pass membrane protein</topology>
    </subcellularLocation>
</comment>
<comment type="similarity">
    <text evidence="1">Belongs to the PsbE/PsbF family.</text>
</comment>
<keyword id="KW-0150">Chloroplast</keyword>
<keyword id="KW-0249">Electron transport</keyword>
<keyword id="KW-0349">Heme</keyword>
<keyword id="KW-0408">Iron</keyword>
<keyword id="KW-0472">Membrane</keyword>
<keyword id="KW-0479">Metal-binding</keyword>
<keyword id="KW-0602">Photosynthesis</keyword>
<keyword id="KW-0604">Photosystem II</keyword>
<keyword id="KW-0934">Plastid</keyword>
<keyword id="KW-0793">Thylakoid</keyword>
<keyword id="KW-0812">Transmembrane</keyword>
<keyword id="KW-1133">Transmembrane helix</keyword>
<keyword id="KW-0813">Transport</keyword>
<sequence>MSGNTGERSFADIITSIRYWVIHSITIPSLFIAGWLFVSTGLAYDVFGSPRPNEYFTESRQEVPLVTGRFDPLEQLDEFTRSF</sequence>
<geneLocation type="chloroplast"/>
<gene>
    <name evidence="1" type="primary">psbE</name>
</gene>
<feature type="chain" id="PRO_0000200331" description="Cytochrome b559 subunit alpha">
    <location>
        <begin position="1"/>
        <end position="83"/>
    </location>
</feature>
<feature type="transmembrane region" description="Helical" evidence="1">
    <location>
        <begin position="21"/>
        <end position="35"/>
    </location>
</feature>
<feature type="binding site" description="axial binding residue" evidence="1">
    <location>
        <position position="23"/>
    </location>
    <ligand>
        <name>heme</name>
        <dbReference type="ChEBI" id="CHEBI:30413"/>
        <note>ligand shared with beta subunit</note>
    </ligand>
    <ligandPart>
        <name>Fe</name>
        <dbReference type="ChEBI" id="CHEBI:18248"/>
    </ligandPart>
</feature>
<proteinExistence type="inferred from homology"/>
<evidence type="ECO:0000255" key="1">
    <source>
        <dbReference type="HAMAP-Rule" id="MF_00642"/>
    </source>
</evidence>
<accession>P59703</accession>
<reference key="1">
    <citation type="submission" date="2003-02" db="EMBL/GenBank/DDBJ databases">
        <title>Complete nucleotide sequence of Pinus koraiensis.</title>
        <authorList>
            <person name="Noh E.W."/>
            <person name="Lee J.S."/>
            <person name="Choi Y.I."/>
            <person name="Han M.S."/>
            <person name="Yi Y.S."/>
            <person name="Han S.U."/>
        </authorList>
    </citation>
    <scope>NUCLEOTIDE SEQUENCE [LARGE SCALE GENOMIC DNA]</scope>
    <source>
        <strain>KangWon16</strain>
    </source>
</reference>
<protein>
    <recommendedName>
        <fullName evidence="1">Cytochrome b559 subunit alpha</fullName>
    </recommendedName>
    <alternativeName>
        <fullName evidence="1">PSII reaction center subunit V</fullName>
    </alternativeName>
</protein>
<organism>
    <name type="scientific">Pinus koraiensis</name>
    <name type="common">Korean pine</name>
    <dbReference type="NCBI Taxonomy" id="88728"/>
    <lineage>
        <taxon>Eukaryota</taxon>
        <taxon>Viridiplantae</taxon>
        <taxon>Streptophyta</taxon>
        <taxon>Embryophyta</taxon>
        <taxon>Tracheophyta</taxon>
        <taxon>Spermatophyta</taxon>
        <taxon>Pinopsida</taxon>
        <taxon>Pinidae</taxon>
        <taxon>Conifers I</taxon>
        <taxon>Pinales</taxon>
        <taxon>Pinaceae</taxon>
        <taxon>Pinus</taxon>
        <taxon>Pinus subgen. Strobus</taxon>
    </lineage>
</organism>
<name>PSBE_PINKO</name>
<dbReference type="EMBL" id="AY228468">
    <property type="protein sequence ID" value="AAO74032.1"/>
    <property type="molecule type" value="Genomic_DNA"/>
</dbReference>
<dbReference type="RefSeq" id="NP_817184.1">
    <property type="nucleotide sequence ID" value="NC_004677.2"/>
</dbReference>
<dbReference type="SMR" id="P59703"/>
<dbReference type="GeneID" id="806918"/>
<dbReference type="GO" id="GO:0009535">
    <property type="term" value="C:chloroplast thylakoid membrane"/>
    <property type="evidence" value="ECO:0007669"/>
    <property type="project" value="UniProtKB-SubCell"/>
</dbReference>
<dbReference type="GO" id="GO:0009539">
    <property type="term" value="C:photosystem II reaction center"/>
    <property type="evidence" value="ECO:0007669"/>
    <property type="project" value="InterPro"/>
</dbReference>
<dbReference type="GO" id="GO:0009055">
    <property type="term" value="F:electron transfer activity"/>
    <property type="evidence" value="ECO:0007669"/>
    <property type="project" value="UniProtKB-UniRule"/>
</dbReference>
<dbReference type="GO" id="GO:0020037">
    <property type="term" value="F:heme binding"/>
    <property type="evidence" value="ECO:0007669"/>
    <property type="project" value="InterPro"/>
</dbReference>
<dbReference type="GO" id="GO:0005506">
    <property type="term" value="F:iron ion binding"/>
    <property type="evidence" value="ECO:0007669"/>
    <property type="project" value="UniProtKB-UniRule"/>
</dbReference>
<dbReference type="GO" id="GO:0009767">
    <property type="term" value="P:photosynthetic electron transport chain"/>
    <property type="evidence" value="ECO:0007669"/>
    <property type="project" value="InterPro"/>
</dbReference>
<dbReference type="Gene3D" id="1.20.5.860">
    <property type="entry name" value="Photosystem II cytochrome b559, alpha subunit"/>
    <property type="match status" value="1"/>
</dbReference>
<dbReference type="HAMAP" id="MF_00642">
    <property type="entry name" value="PSII_PsbE"/>
    <property type="match status" value="1"/>
</dbReference>
<dbReference type="InterPro" id="IPR006217">
    <property type="entry name" value="PSII_cyt_b559_asu"/>
</dbReference>
<dbReference type="InterPro" id="IPR037025">
    <property type="entry name" value="PSII_cyt_b559_asu_sf"/>
</dbReference>
<dbReference type="InterPro" id="IPR006216">
    <property type="entry name" value="PSII_cyt_b559_CS"/>
</dbReference>
<dbReference type="InterPro" id="IPR013081">
    <property type="entry name" value="PSII_cyt_b559_N"/>
</dbReference>
<dbReference type="InterPro" id="IPR013082">
    <property type="entry name" value="PSII_cytb559_asu_lum"/>
</dbReference>
<dbReference type="NCBIfam" id="TIGR01332">
    <property type="entry name" value="cyt_b559_alpha"/>
    <property type="match status" value="1"/>
</dbReference>
<dbReference type="PANTHER" id="PTHR33391">
    <property type="entry name" value="CYTOCHROME B559 SUBUNIT BETA-RELATED"/>
    <property type="match status" value="1"/>
</dbReference>
<dbReference type="PANTHER" id="PTHR33391:SF9">
    <property type="entry name" value="CYTOCHROME B559 SUBUNIT BETA-RELATED"/>
    <property type="match status" value="1"/>
</dbReference>
<dbReference type="Pfam" id="PF00283">
    <property type="entry name" value="Cytochrom_B559"/>
    <property type="match status" value="1"/>
</dbReference>
<dbReference type="Pfam" id="PF00284">
    <property type="entry name" value="Cytochrom_B559a"/>
    <property type="match status" value="1"/>
</dbReference>
<dbReference type="PIRSF" id="PIRSF000036">
    <property type="entry name" value="PsbE"/>
    <property type="match status" value="1"/>
</dbReference>
<dbReference type="SUPFAM" id="SSF161045">
    <property type="entry name" value="Cytochrome b559 subunits"/>
    <property type="match status" value="1"/>
</dbReference>
<dbReference type="PROSITE" id="PS00537">
    <property type="entry name" value="CYTOCHROME_B559"/>
    <property type="match status" value="1"/>
</dbReference>